<organism>
    <name type="scientific">Citrobacter koseri (strain ATCC BAA-895 / CDC 4225-83 / SGSC4696)</name>
    <dbReference type="NCBI Taxonomy" id="290338"/>
    <lineage>
        <taxon>Bacteria</taxon>
        <taxon>Pseudomonadati</taxon>
        <taxon>Pseudomonadota</taxon>
        <taxon>Gammaproteobacteria</taxon>
        <taxon>Enterobacterales</taxon>
        <taxon>Enterobacteriaceae</taxon>
        <taxon>Citrobacter</taxon>
    </lineage>
</organism>
<reference key="1">
    <citation type="submission" date="2007-08" db="EMBL/GenBank/DDBJ databases">
        <authorList>
            <consortium name="The Citrobacter koseri Genome Sequencing Project"/>
            <person name="McClelland M."/>
            <person name="Sanderson E.K."/>
            <person name="Porwollik S."/>
            <person name="Spieth J."/>
            <person name="Clifton W.S."/>
            <person name="Latreille P."/>
            <person name="Courtney L."/>
            <person name="Wang C."/>
            <person name="Pepin K."/>
            <person name="Bhonagiri V."/>
            <person name="Nash W."/>
            <person name="Johnson M."/>
            <person name="Thiruvilangam P."/>
            <person name="Wilson R."/>
        </authorList>
    </citation>
    <scope>NUCLEOTIDE SEQUENCE [LARGE SCALE GENOMIC DNA]</scope>
    <source>
        <strain>ATCC BAA-895 / CDC 4225-83 / SGSC4696</strain>
    </source>
</reference>
<sequence>MKICLVDETGAGDGALSVLAARWGLEHDENNPMALVLTTAHLELRKRDEPKLGGIFVDFVGGAMAHRRKFGGGRGEAVAKAVGIKGDYLPDVVDATAGLGRDAFVLASVGCRVRMLERNPVVAALLDDGLARGYADPEIGPWLQERLQLIHASSLTALTDITPRPQVVYLDPMFPHKQKSALVKKEMRVFQSLVGPDLDADGLLAPARQLATKRVVVKRPDYAPPLADIATPNAVVTKGHRFDIYTGTALVE</sequence>
<accession>A8AR83</accession>
<evidence type="ECO:0000255" key="1">
    <source>
        <dbReference type="HAMAP-Rule" id="MF_01523"/>
    </source>
</evidence>
<dbReference type="EC" id="2.1.1.242" evidence="1"/>
<dbReference type="EMBL" id="CP000822">
    <property type="protein sequence ID" value="ABV15996.1"/>
    <property type="molecule type" value="Genomic_DNA"/>
</dbReference>
<dbReference type="RefSeq" id="WP_012135636.1">
    <property type="nucleotide sequence ID" value="NC_009792.1"/>
</dbReference>
<dbReference type="SMR" id="A8AR83"/>
<dbReference type="STRING" id="290338.CKO_04952"/>
<dbReference type="GeneID" id="45138429"/>
<dbReference type="KEGG" id="cko:CKO_04952"/>
<dbReference type="HOGENOM" id="CLU_076324_0_0_6"/>
<dbReference type="OrthoDB" id="3191794at2"/>
<dbReference type="Proteomes" id="UP000008148">
    <property type="component" value="Chromosome"/>
</dbReference>
<dbReference type="GO" id="GO:0005737">
    <property type="term" value="C:cytoplasm"/>
    <property type="evidence" value="ECO:0007669"/>
    <property type="project" value="UniProtKB-SubCell"/>
</dbReference>
<dbReference type="GO" id="GO:0008990">
    <property type="term" value="F:rRNA (guanine-N2-)-methyltransferase activity"/>
    <property type="evidence" value="ECO:0007669"/>
    <property type="project" value="UniProtKB-UniRule"/>
</dbReference>
<dbReference type="CDD" id="cd02440">
    <property type="entry name" value="AdoMet_MTases"/>
    <property type="match status" value="1"/>
</dbReference>
<dbReference type="FunFam" id="3.40.50.150:FF:000072">
    <property type="entry name" value="Ribosomal RNA small subunit methyltransferase J"/>
    <property type="match status" value="1"/>
</dbReference>
<dbReference type="Gene3D" id="3.40.50.150">
    <property type="entry name" value="Vaccinia Virus protein VP39"/>
    <property type="match status" value="1"/>
</dbReference>
<dbReference type="Gene3D" id="3.40.1630.10">
    <property type="entry name" value="YhiQ-like domain"/>
    <property type="match status" value="1"/>
</dbReference>
<dbReference type="HAMAP" id="MF_01523">
    <property type="entry name" value="16SrRNA_methyltr_J"/>
    <property type="match status" value="1"/>
</dbReference>
<dbReference type="InterPro" id="IPR007536">
    <property type="entry name" value="16SrRNA_methylTrfase_J"/>
</dbReference>
<dbReference type="InterPro" id="IPR029063">
    <property type="entry name" value="SAM-dependent_MTases_sf"/>
</dbReference>
<dbReference type="NCBIfam" id="NF008012">
    <property type="entry name" value="PRK10742.1"/>
    <property type="match status" value="1"/>
</dbReference>
<dbReference type="PANTHER" id="PTHR36112">
    <property type="entry name" value="RIBOSOMAL RNA SMALL SUBUNIT METHYLTRANSFERASE J"/>
    <property type="match status" value="1"/>
</dbReference>
<dbReference type="PANTHER" id="PTHR36112:SF1">
    <property type="entry name" value="RIBOSOMAL RNA SMALL SUBUNIT METHYLTRANSFERASE J"/>
    <property type="match status" value="1"/>
</dbReference>
<dbReference type="Pfam" id="PF04445">
    <property type="entry name" value="SAM_MT"/>
    <property type="match status" value="1"/>
</dbReference>
<dbReference type="SUPFAM" id="SSF53335">
    <property type="entry name" value="S-adenosyl-L-methionine-dependent methyltransferases"/>
    <property type="match status" value="1"/>
</dbReference>
<proteinExistence type="inferred from homology"/>
<comment type="function">
    <text evidence="1">Specifically methylates the guanosine in position 1516 of 16S rRNA.</text>
</comment>
<comment type="catalytic activity">
    <reaction evidence="1">
        <text>guanosine(1516) in 16S rRNA + S-adenosyl-L-methionine = N(2)-methylguanosine(1516) in 16S rRNA + S-adenosyl-L-homocysteine + H(+)</text>
        <dbReference type="Rhea" id="RHEA:43220"/>
        <dbReference type="Rhea" id="RHEA-COMP:10412"/>
        <dbReference type="Rhea" id="RHEA-COMP:10413"/>
        <dbReference type="ChEBI" id="CHEBI:15378"/>
        <dbReference type="ChEBI" id="CHEBI:57856"/>
        <dbReference type="ChEBI" id="CHEBI:59789"/>
        <dbReference type="ChEBI" id="CHEBI:74269"/>
        <dbReference type="ChEBI" id="CHEBI:74481"/>
        <dbReference type="EC" id="2.1.1.242"/>
    </reaction>
</comment>
<comment type="subcellular location">
    <subcellularLocation>
        <location evidence="1">Cytoplasm</location>
    </subcellularLocation>
</comment>
<comment type="similarity">
    <text evidence="1">Belongs to the methyltransferase superfamily. RsmJ family.</text>
</comment>
<name>RSMJ_CITK8</name>
<keyword id="KW-0963">Cytoplasm</keyword>
<keyword id="KW-0489">Methyltransferase</keyword>
<keyword id="KW-1185">Reference proteome</keyword>
<keyword id="KW-0698">rRNA processing</keyword>
<keyword id="KW-0949">S-adenosyl-L-methionine</keyword>
<keyword id="KW-0808">Transferase</keyword>
<protein>
    <recommendedName>
        <fullName evidence="1">Ribosomal RNA small subunit methyltransferase J</fullName>
        <ecNumber evidence="1">2.1.1.242</ecNumber>
    </recommendedName>
    <alternativeName>
        <fullName evidence="1">16S rRNA m2G1516 methyltransferase</fullName>
    </alternativeName>
    <alternativeName>
        <fullName evidence="1">rRNA (guanine-N(2)-)-methyltransferase</fullName>
    </alternativeName>
</protein>
<feature type="chain" id="PRO_0000316250" description="Ribosomal RNA small subunit methyltransferase J">
    <location>
        <begin position="1"/>
        <end position="252"/>
    </location>
</feature>
<feature type="binding site" evidence="1">
    <location>
        <begin position="101"/>
        <end position="102"/>
    </location>
    <ligand>
        <name>S-adenosyl-L-methionine</name>
        <dbReference type="ChEBI" id="CHEBI:59789"/>
    </ligand>
</feature>
<feature type="binding site" evidence="1">
    <location>
        <begin position="117"/>
        <end position="118"/>
    </location>
    <ligand>
        <name>S-adenosyl-L-methionine</name>
        <dbReference type="ChEBI" id="CHEBI:59789"/>
    </ligand>
</feature>
<feature type="binding site" evidence="1">
    <location>
        <begin position="153"/>
        <end position="154"/>
    </location>
    <ligand>
        <name>S-adenosyl-L-methionine</name>
        <dbReference type="ChEBI" id="CHEBI:59789"/>
    </ligand>
</feature>
<feature type="binding site" evidence="1">
    <location>
        <position position="171"/>
    </location>
    <ligand>
        <name>S-adenosyl-L-methionine</name>
        <dbReference type="ChEBI" id="CHEBI:59789"/>
    </ligand>
</feature>
<gene>
    <name evidence="1" type="primary">rsmJ</name>
    <name type="ordered locus">CKO_04952</name>
</gene>